<evidence type="ECO:0000255" key="1">
    <source>
        <dbReference type="HAMAP-Rule" id="MF_00055"/>
    </source>
</evidence>
<proteinExistence type="inferred from homology"/>
<feature type="chain" id="PRO_0000134393" description="MEMO1 family protein TV1383">
    <location>
        <begin position="1"/>
        <end position="269"/>
    </location>
</feature>
<sequence length="269" mass="29989">MIRKPAVAGYFYPSNRNELLSLISSFHVQQSEVSCQPIGVVVPHAGIVYSGRTAMYSYNALRNSSIRDFIIIGPNHRPMTPYASIFPSGSWETPLGNAIINEELASELYKNSQYIVKDEESHSVEHSIEVQIPFLQYMFGNSFTFVPVILGDQEKVVANDIASALMRLSKPYILIASSDFTHYERSDIVERKDMDLISRIVDLDIDGFYDTIERENVTACGYGAIAILMIIAKKIGAKISLLNHSNSGDVTNDYDEVVGYSSIVACRQI</sequence>
<organism>
    <name type="scientific">Thermoplasma volcanium (strain ATCC 51530 / DSM 4299 / JCM 9571 / NBRC 15438 / GSS1)</name>
    <dbReference type="NCBI Taxonomy" id="273116"/>
    <lineage>
        <taxon>Archaea</taxon>
        <taxon>Methanobacteriati</taxon>
        <taxon>Thermoplasmatota</taxon>
        <taxon>Thermoplasmata</taxon>
        <taxon>Thermoplasmatales</taxon>
        <taxon>Thermoplasmataceae</taxon>
        <taxon>Thermoplasma</taxon>
    </lineage>
</organism>
<name>Y1383_THEVO</name>
<reference key="1">
    <citation type="journal article" date="2000" name="Proc. Natl. Acad. Sci. U.S.A.">
        <title>Archaeal adaptation to higher temperatures revealed by genomic sequence of Thermoplasma volcanium.</title>
        <authorList>
            <person name="Kawashima T."/>
            <person name="Amano N."/>
            <person name="Koike H."/>
            <person name="Makino S."/>
            <person name="Higuchi S."/>
            <person name="Kawashima-Ohya Y."/>
            <person name="Watanabe K."/>
            <person name="Yamazaki M."/>
            <person name="Kanehori K."/>
            <person name="Kawamoto T."/>
            <person name="Nunoshiba T."/>
            <person name="Yamamoto Y."/>
            <person name="Aramaki H."/>
            <person name="Makino K."/>
            <person name="Suzuki M."/>
        </authorList>
    </citation>
    <scope>NUCLEOTIDE SEQUENCE [LARGE SCALE GENOMIC DNA]</scope>
    <source>
        <strain>ATCC 51530 / DSM 4299 / JCM 9571 / NBRC 15438 / GSS1</strain>
    </source>
</reference>
<comment type="similarity">
    <text evidence="1">Belongs to the MEMO1 family.</text>
</comment>
<gene>
    <name type="ordered locus">TV1383</name>
    <name type="ORF">TVG1430252</name>
</gene>
<dbReference type="EMBL" id="BA000011">
    <property type="protein sequence ID" value="BAB60525.1"/>
    <property type="molecule type" value="Genomic_DNA"/>
</dbReference>
<dbReference type="RefSeq" id="WP_010917616.1">
    <property type="nucleotide sequence ID" value="NC_002689.2"/>
</dbReference>
<dbReference type="SMR" id="Q978N2"/>
<dbReference type="STRING" id="273116.gene:9382191"/>
<dbReference type="PaxDb" id="273116-14325622"/>
<dbReference type="GeneID" id="1442074"/>
<dbReference type="KEGG" id="tvo:TVG1430252"/>
<dbReference type="eggNOG" id="arCOG01728">
    <property type="taxonomic scope" value="Archaea"/>
</dbReference>
<dbReference type="HOGENOM" id="CLU_038085_2_0_2"/>
<dbReference type="OrthoDB" id="372162at2157"/>
<dbReference type="PhylomeDB" id="Q978N2"/>
<dbReference type="Proteomes" id="UP000001017">
    <property type="component" value="Chromosome"/>
</dbReference>
<dbReference type="CDD" id="cd07361">
    <property type="entry name" value="MEMO_like"/>
    <property type="match status" value="1"/>
</dbReference>
<dbReference type="Gene3D" id="3.40.830.10">
    <property type="entry name" value="LigB-like"/>
    <property type="match status" value="1"/>
</dbReference>
<dbReference type="HAMAP" id="MF_00055">
    <property type="entry name" value="MEMO1"/>
    <property type="match status" value="1"/>
</dbReference>
<dbReference type="InterPro" id="IPR002737">
    <property type="entry name" value="MEMO1_fam"/>
</dbReference>
<dbReference type="NCBIfam" id="TIGR04336">
    <property type="entry name" value="AmmeMemoSam_B"/>
    <property type="match status" value="1"/>
</dbReference>
<dbReference type="NCBIfam" id="NF001987">
    <property type="entry name" value="PRK00782.1"/>
    <property type="match status" value="1"/>
</dbReference>
<dbReference type="PANTHER" id="PTHR11060">
    <property type="entry name" value="PROTEIN MEMO1"/>
    <property type="match status" value="1"/>
</dbReference>
<dbReference type="PANTHER" id="PTHR11060:SF0">
    <property type="entry name" value="PROTEIN MEMO1"/>
    <property type="match status" value="1"/>
</dbReference>
<dbReference type="Pfam" id="PF01875">
    <property type="entry name" value="Memo"/>
    <property type="match status" value="1"/>
</dbReference>
<accession>Q978N2</accession>
<protein>
    <recommendedName>
        <fullName evidence="1">MEMO1 family protein TV1383</fullName>
    </recommendedName>
</protein>